<feature type="chain" id="PRO_0000115687" description="Small ribosomal subunit protein uS15">
    <location>
        <begin position="1"/>
        <end position="148"/>
    </location>
</feature>
<evidence type="ECO:0000269" key="1">
    <source>
    </source>
</evidence>
<evidence type="ECO:0000305" key="2"/>
<comment type="developmental stage">
    <text evidence="1">Expressed in late sporogonial stages.</text>
</comment>
<comment type="similarity">
    <text evidence="2">Belongs to the universal ribosomal protein uS15 family.</text>
</comment>
<keyword id="KW-0002">3D-structure</keyword>
<keyword id="KW-1185">Reference proteome</keyword>
<keyword id="KW-0687">Ribonucleoprotein</keyword>
<keyword id="KW-0689">Ribosomal protein</keyword>
<accession>Q8SRB3</accession>
<reference key="1">
    <citation type="journal article" date="2001" name="Nature">
        <title>Genome sequence and gene compaction of the eukaryote parasite Encephalitozoon cuniculi.</title>
        <authorList>
            <person name="Katinka M.D."/>
            <person name="Duprat S."/>
            <person name="Cornillot E."/>
            <person name="Metenier G."/>
            <person name="Thomarat F."/>
            <person name="Prensier G."/>
            <person name="Barbe V."/>
            <person name="Peyretaillade E."/>
            <person name="Brottier P."/>
            <person name="Wincker P."/>
            <person name="Delbac F."/>
            <person name="El Alaoui H."/>
            <person name="Peyret P."/>
            <person name="Saurin W."/>
            <person name="Gouy M."/>
            <person name="Weissenbach J."/>
            <person name="Vivares C.P."/>
        </authorList>
    </citation>
    <scope>NUCLEOTIDE SEQUENCE [LARGE SCALE GENOMIC DNA]</scope>
    <source>
        <strain>GB-M1</strain>
    </source>
</reference>
<reference key="2">
    <citation type="journal article" date="2006" name="Proteomics">
        <title>Proteomic analysis of the eukaryotic parasite Encephalitozoon cuniculi (microsporidia): a reference map for proteins expressed in late sporogonial stages.</title>
        <authorList>
            <person name="Brosson D."/>
            <person name="Kuhn L."/>
            <person name="Delbac F."/>
            <person name="Garin J."/>
            <person name="Vivares C.P."/>
            <person name="Texier C."/>
        </authorList>
    </citation>
    <scope>IDENTIFICATION BY MASS SPECTROMETRY [LARGE SCALE ANALYSIS]</scope>
    <scope>DEVELOPMENTAL STAGE</scope>
</reference>
<name>RS13_ENCCU</name>
<sequence>MAKMHSSGKGRSGSVKPYATAFPTWLTKSVDEIKSDVIQMGNKGVPAPDIGTRLRDEYGIGKASDVLGESITRFLQRNGVVPKIPHDLESLVHRANTLRSHLNIYRKDNSAKYRLILVSSRMYRVARYYKRKMRIPGNWKPKLVELNK</sequence>
<proteinExistence type="evidence at protein level"/>
<gene>
    <name type="primary">RPS13</name>
    <name type="ordered locus">ECU08_1060</name>
</gene>
<protein>
    <recommendedName>
        <fullName evidence="2">Small ribosomal subunit protein uS15</fullName>
    </recommendedName>
    <alternativeName>
        <fullName>40S ribosomal protein S13</fullName>
    </alternativeName>
</protein>
<organism>
    <name type="scientific">Encephalitozoon cuniculi (strain GB-M1)</name>
    <name type="common">Microsporidian parasite</name>
    <dbReference type="NCBI Taxonomy" id="284813"/>
    <lineage>
        <taxon>Eukaryota</taxon>
        <taxon>Fungi</taxon>
        <taxon>Fungi incertae sedis</taxon>
        <taxon>Microsporidia</taxon>
        <taxon>Unikaryonidae</taxon>
        <taxon>Encephalitozoon</taxon>
    </lineage>
</organism>
<dbReference type="EMBL" id="AL590448">
    <property type="protein sequence ID" value="CAD26412.1"/>
    <property type="molecule type" value="Genomic_DNA"/>
</dbReference>
<dbReference type="RefSeq" id="NP_597236.1">
    <property type="nucleotide sequence ID" value="NM_001041845.1"/>
</dbReference>
<dbReference type="PDB" id="7QEP">
    <property type="method" value="EM"/>
    <property type="resolution" value="2.70 A"/>
    <property type="chains" value="C3=1-148"/>
</dbReference>
<dbReference type="PDBsum" id="7QEP"/>
<dbReference type="EMDB" id="EMD-13936"/>
<dbReference type="SMR" id="Q8SRB3"/>
<dbReference type="FunCoup" id="Q8SRB3">
    <property type="interactions" value="222"/>
</dbReference>
<dbReference type="STRING" id="284813.Q8SRB3"/>
<dbReference type="GeneID" id="859658"/>
<dbReference type="KEGG" id="ecu:ECU08_1060"/>
<dbReference type="VEuPathDB" id="MicrosporidiaDB:ECU08_1060"/>
<dbReference type="HOGENOM" id="CLU_090139_2_0_1"/>
<dbReference type="InParanoid" id="Q8SRB3"/>
<dbReference type="OMA" id="MHTRRKG"/>
<dbReference type="OrthoDB" id="623277at2759"/>
<dbReference type="Proteomes" id="UP000000819">
    <property type="component" value="Chromosome VIII"/>
</dbReference>
<dbReference type="GO" id="GO:0022627">
    <property type="term" value="C:cytosolic small ribosomal subunit"/>
    <property type="evidence" value="ECO:0007669"/>
    <property type="project" value="TreeGrafter"/>
</dbReference>
<dbReference type="GO" id="GO:0070181">
    <property type="term" value="F:small ribosomal subunit rRNA binding"/>
    <property type="evidence" value="ECO:0007669"/>
    <property type="project" value="TreeGrafter"/>
</dbReference>
<dbReference type="GO" id="GO:0003735">
    <property type="term" value="F:structural constituent of ribosome"/>
    <property type="evidence" value="ECO:0007669"/>
    <property type="project" value="InterPro"/>
</dbReference>
<dbReference type="GO" id="GO:0006412">
    <property type="term" value="P:translation"/>
    <property type="evidence" value="ECO:0007669"/>
    <property type="project" value="InterPro"/>
</dbReference>
<dbReference type="CDD" id="cd00353">
    <property type="entry name" value="Ribosomal_S15p_S13e"/>
    <property type="match status" value="1"/>
</dbReference>
<dbReference type="Gene3D" id="4.10.860.130">
    <property type="match status" value="1"/>
</dbReference>
<dbReference type="Gene3D" id="1.10.287.10">
    <property type="entry name" value="S15/NS1, RNA-binding"/>
    <property type="match status" value="1"/>
</dbReference>
<dbReference type="HAMAP" id="MF_01343_A">
    <property type="entry name" value="Ribosomal_uS15_A"/>
    <property type="match status" value="1"/>
</dbReference>
<dbReference type="InterPro" id="IPR000589">
    <property type="entry name" value="Ribosomal_uS15"/>
</dbReference>
<dbReference type="InterPro" id="IPR023029">
    <property type="entry name" value="Ribosomal_uS15_arc_euk"/>
</dbReference>
<dbReference type="InterPro" id="IPR012606">
    <property type="entry name" value="Ribosomal_uS15_N"/>
</dbReference>
<dbReference type="InterPro" id="IPR009068">
    <property type="entry name" value="uS15_NS1_RNA-bd_sf"/>
</dbReference>
<dbReference type="PANTHER" id="PTHR11885">
    <property type="entry name" value="RIBOSOMAL PROTEIN S15P/S13E"/>
    <property type="match status" value="1"/>
</dbReference>
<dbReference type="PANTHER" id="PTHR11885:SF6">
    <property type="entry name" value="SMALL RIBOSOMAL SUBUNIT PROTEIN US15"/>
    <property type="match status" value="1"/>
</dbReference>
<dbReference type="Pfam" id="PF08069">
    <property type="entry name" value="Ribosomal_S13_N"/>
    <property type="match status" value="1"/>
</dbReference>
<dbReference type="Pfam" id="PF00312">
    <property type="entry name" value="Ribosomal_S15"/>
    <property type="match status" value="1"/>
</dbReference>
<dbReference type="SMART" id="SM01386">
    <property type="entry name" value="Ribosomal_S13_N"/>
    <property type="match status" value="1"/>
</dbReference>
<dbReference type="SUPFAM" id="SSF47060">
    <property type="entry name" value="S15/NS1 RNA-binding domain"/>
    <property type="match status" value="1"/>
</dbReference>
<dbReference type="PROSITE" id="PS00362">
    <property type="entry name" value="RIBOSOMAL_S15"/>
    <property type="match status" value="1"/>
</dbReference>